<keyword id="KW-0002">3D-structure</keyword>
<keyword id="KW-0963">Cytoplasm</keyword>
<keyword id="KW-0413">Isomerase</keyword>
<keyword id="KW-1185">Reference proteome</keyword>
<keyword id="KW-0697">Rotamase</keyword>
<dbReference type="EC" id="5.2.1.8" evidence="3"/>
<dbReference type="EMBL" id="AL123456">
    <property type="protein sequence ID" value="CCP42731.1"/>
    <property type="molecule type" value="Genomic_DNA"/>
</dbReference>
<dbReference type="PIR" id="G70698">
    <property type="entry name" value="G70698"/>
</dbReference>
<dbReference type="RefSeq" id="NP_214523.1">
    <property type="nucleotide sequence ID" value="NC_000962.3"/>
</dbReference>
<dbReference type="RefSeq" id="WP_003400321.1">
    <property type="nucleotide sequence ID" value="NZ_NVQJ01000005.1"/>
</dbReference>
<dbReference type="PDB" id="1W74">
    <property type="method" value="X-ray"/>
    <property type="resolution" value="2.60 A"/>
    <property type="chains" value="A/B=2-182"/>
</dbReference>
<dbReference type="PDBsum" id="1W74"/>
<dbReference type="SMR" id="P9WHW3"/>
<dbReference type="FunCoup" id="P9WHW3">
    <property type="interactions" value="405"/>
</dbReference>
<dbReference type="STRING" id="83332.Rv0009"/>
<dbReference type="PaxDb" id="83332-Rv0009"/>
<dbReference type="DNASU" id="887087"/>
<dbReference type="GeneID" id="45423968"/>
<dbReference type="GeneID" id="887087"/>
<dbReference type="KEGG" id="mtu:Rv0009"/>
<dbReference type="KEGG" id="mtv:RVBD_0009"/>
<dbReference type="TubercuList" id="Rv0009"/>
<dbReference type="eggNOG" id="COG0652">
    <property type="taxonomic scope" value="Bacteria"/>
</dbReference>
<dbReference type="InParanoid" id="P9WHW3"/>
<dbReference type="OrthoDB" id="9807797at2"/>
<dbReference type="PhylomeDB" id="P9WHW3"/>
<dbReference type="BRENDA" id="5.2.1.8">
    <property type="organism ID" value="3445"/>
</dbReference>
<dbReference type="EvolutionaryTrace" id="P9WHW3"/>
<dbReference type="Proteomes" id="UP000001584">
    <property type="component" value="Chromosome"/>
</dbReference>
<dbReference type="GO" id="GO:0005829">
    <property type="term" value="C:cytosol"/>
    <property type="evidence" value="ECO:0007005"/>
    <property type="project" value="MTBBASE"/>
</dbReference>
<dbReference type="GO" id="GO:0005576">
    <property type="term" value="C:extracellular region"/>
    <property type="evidence" value="ECO:0007005"/>
    <property type="project" value="MTBBASE"/>
</dbReference>
<dbReference type="GO" id="GO:0009274">
    <property type="term" value="C:peptidoglycan-based cell wall"/>
    <property type="evidence" value="ECO:0007005"/>
    <property type="project" value="MTBBASE"/>
</dbReference>
<dbReference type="GO" id="GO:0005886">
    <property type="term" value="C:plasma membrane"/>
    <property type="evidence" value="ECO:0007005"/>
    <property type="project" value="MTBBASE"/>
</dbReference>
<dbReference type="GO" id="GO:0003755">
    <property type="term" value="F:peptidyl-prolyl cis-trans isomerase activity"/>
    <property type="evidence" value="ECO:0000314"/>
    <property type="project" value="MTBBASE"/>
</dbReference>
<dbReference type="GO" id="GO:0006457">
    <property type="term" value="P:protein folding"/>
    <property type="evidence" value="ECO:0000318"/>
    <property type="project" value="GO_Central"/>
</dbReference>
<dbReference type="GO" id="GO:0010039">
    <property type="term" value="P:response to iron ion"/>
    <property type="evidence" value="ECO:0000270"/>
    <property type="project" value="MTBBASE"/>
</dbReference>
<dbReference type="CDD" id="cd00317">
    <property type="entry name" value="cyclophilin"/>
    <property type="match status" value="1"/>
</dbReference>
<dbReference type="FunFam" id="2.40.100.10:FF:000028">
    <property type="entry name" value="Peptidyl-prolyl cis-trans isomerase"/>
    <property type="match status" value="1"/>
</dbReference>
<dbReference type="Gene3D" id="2.40.100.10">
    <property type="entry name" value="Cyclophilin-like"/>
    <property type="match status" value="1"/>
</dbReference>
<dbReference type="InterPro" id="IPR029000">
    <property type="entry name" value="Cyclophilin-like_dom_sf"/>
</dbReference>
<dbReference type="InterPro" id="IPR024936">
    <property type="entry name" value="Cyclophilin-type_PPIase"/>
</dbReference>
<dbReference type="InterPro" id="IPR020892">
    <property type="entry name" value="Cyclophilin-type_PPIase_CS"/>
</dbReference>
<dbReference type="InterPro" id="IPR002130">
    <property type="entry name" value="Cyclophilin-type_PPIase_dom"/>
</dbReference>
<dbReference type="InterPro" id="IPR044666">
    <property type="entry name" value="Cyclophilin_A-like"/>
</dbReference>
<dbReference type="PANTHER" id="PTHR45625">
    <property type="entry name" value="PEPTIDYL-PROLYL CIS-TRANS ISOMERASE-RELATED"/>
    <property type="match status" value="1"/>
</dbReference>
<dbReference type="PANTHER" id="PTHR45625:SF4">
    <property type="entry name" value="PEPTIDYLPROLYL ISOMERASE DOMAIN AND WD REPEAT-CONTAINING PROTEIN 1"/>
    <property type="match status" value="1"/>
</dbReference>
<dbReference type="Pfam" id="PF00160">
    <property type="entry name" value="Pro_isomerase"/>
    <property type="match status" value="1"/>
</dbReference>
<dbReference type="PIRSF" id="PIRSF001467">
    <property type="entry name" value="Peptidylpro_ismrse"/>
    <property type="match status" value="1"/>
</dbReference>
<dbReference type="PRINTS" id="PR00153">
    <property type="entry name" value="CSAPPISMRASE"/>
</dbReference>
<dbReference type="SUPFAM" id="SSF50891">
    <property type="entry name" value="Cyclophilin-like"/>
    <property type="match status" value="1"/>
</dbReference>
<dbReference type="PROSITE" id="PS00170">
    <property type="entry name" value="CSA_PPIASE_1"/>
    <property type="match status" value="1"/>
</dbReference>
<dbReference type="PROSITE" id="PS50072">
    <property type="entry name" value="CSA_PPIASE_2"/>
    <property type="match status" value="1"/>
</dbReference>
<protein>
    <recommendedName>
        <fullName>Peptidyl-prolyl cis-trans isomerase A</fullName>
        <shortName>PPIase A</shortName>
        <ecNumber evidence="3">5.2.1.8</ecNumber>
    </recommendedName>
    <alternativeName>
        <fullName>Cyclophilin</fullName>
    </alternativeName>
    <alternativeName>
        <fullName>Rotamase A</fullName>
    </alternativeName>
</protein>
<gene>
    <name evidence="5" type="primary">ppiA</name>
    <name type="ordered locus">Rv0009</name>
    <name type="ORF">MTCY10H4.08</name>
</gene>
<feature type="chain" id="PRO_0000064209" description="Peptidyl-prolyl cis-trans isomerase A">
    <location>
        <begin position="1"/>
        <end position="182"/>
    </location>
</feature>
<feature type="domain" description="PPIase cyclophilin-type" evidence="2">
    <location>
        <begin position="13"/>
        <end position="181"/>
    </location>
</feature>
<feature type="strand" evidence="7">
    <location>
        <begin position="16"/>
        <end position="21"/>
    </location>
</feature>
<feature type="strand" evidence="7">
    <location>
        <begin position="24"/>
        <end position="30"/>
    </location>
</feature>
<feature type="turn" evidence="7">
    <location>
        <begin position="32"/>
        <end position="34"/>
    </location>
</feature>
<feature type="helix" evidence="7">
    <location>
        <begin position="36"/>
        <end position="46"/>
    </location>
</feature>
<feature type="strand" evidence="7">
    <location>
        <begin position="59"/>
        <end position="63"/>
    </location>
</feature>
<feature type="strand" evidence="7">
    <location>
        <begin position="69"/>
        <end position="75"/>
    </location>
</feature>
<feature type="turn" evidence="7">
    <location>
        <begin position="76"/>
        <end position="78"/>
    </location>
</feature>
<feature type="strand" evidence="7">
    <location>
        <begin position="79"/>
        <end position="82"/>
    </location>
</feature>
<feature type="strand" evidence="7">
    <location>
        <begin position="87"/>
        <end position="90"/>
    </location>
</feature>
<feature type="strand" evidence="7">
    <location>
        <begin position="109"/>
        <end position="115"/>
    </location>
</feature>
<feature type="strand" evidence="7">
    <location>
        <begin position="123"/>
        <end position="125"/>
    </location>
</feature>
<feature type="strand" evidence="7">
    <location>
        <begin position="127"/>
        <end position="132"/>
    </location>
</feature>
<feature type="helix" evidence="7">
    <location>
        <begin position="135"/>
        <end position="137"/>
    </location>
</feature>
<feature type="turn" evidence="7">
    <location>
        <begin position="138"/>
        <end position="140"/>
    </location>
</feature>
<feature type="strand" evidence="7">
    <location>
        <begin position="143"/>
        <end position="147"/>
    </location>
</feature>
<feature type="helix" evidence="7">
    <location>
        <begin position="150"/>
        <end position="160"/>
    </location>
</feature>
<feature type="strand" evidence="7">
    <location>
        <begin position="170"/>
        <end position="172"/>
    </location>
</feature>
<feature type="strand" evidence="7">
    <location>
        <begin position="175"/>
        <end position="182"/>
    </location>
</feature>
<reference key="1">
    <citation type="journal article" date="1998" name="Nature">
        <title>Deciphering the biology of Mycobacterium tuberculosis from the complete genome sequence.</title>
        <authorList>
            <person name="Cole S.T."/>
            <person name="Brosch R."/>
            <person name="Parkhill J."/>
            <person name="Garnier T."/>
            <person name="Churcher C.M."/>
            <person name="Harris D.E."/>
            <person name="Gordon S.V."/>
            <person name="Eiglmeier K."/>
            <person name="Gas S."/>
            <person name="Barry C.E. III"/>
            <person name="Tekaia F."/>
            <person name="Badcock K."/>
            <person name="Basham D."/>
            <person name="Brown D."/>
            <person name="Chillingworth T."/>
            <person name="Connor R."/>
            <person name="Davies R.M."/>
            <person name="Devlin K."/>
            <person name="Feltwell T."/>
            <person name="Gentles S."/>
            <person name="Hamlin N."/>
            <person name="Holroyd S."/>
            <person name="Hornsby T."/>
            <person name="Jagels K."/>
            <person name="Krogh A."/>
            <person name="McLean J."/>
            <person name="Moule S."/>
            <person name="Murphy L.D."/>
            <person name="Oliver S."/>
            <person name="Osborne J."/>
            <person name="Quail M.A."/>
            <person name="Rajandream M.A."/>
            <person name="Rogers J."/>
            <person name="Rutter S."/>
            <person name="Seeger K."/>
            <person name="Skelton S."/>
            <person name="Squares S."/>
            <person name="Squares R."/>
            <person name="Sulston J.E."/>
            <person name="Taylor K."/>
            <person name="Whitehead S."/>
            <person name="Barrell B.G."/>
        </authorList>
    </citation>
    <scope>NUCLEOTIDE SEQUENCE [LARGE SCALE GENOMIC DNA]</scope>
    <source>
        <strain>ATCC 25618 / H37Rv</strain>
    </source>
</reference>
<reference key="2">
    <citation type="journal article" date="2006" name="FEBS Lett.">
        <title>Cyclosporin A binding to Mycobacterium tuberculosis peptidyl-prolyl cis-trans isomerase A--investigation by CD, FTIR and fluorescence spectroscopy.</title>
        <authorList>
            <person name="Mitra D."/>
            <person name="Mukherjee S."/>
            <person name="Das A.K."/>
        </authorList>
    </citation>
    <scope>FUNCTION</scope>
</reference>
<reference key="3">
    <citation type="journal article" date="2011" name="Mol. Cell. Proteomics">
        <title>Proteogenomic analysis of Mycobacterium tuberculosis by high resolution mass spectrometry.</title>
        <authorList>
            <person name="Kelkar D.S."/>
            <person name="Kumar D."/>
            <person name="Kumar P."/>
            <person name="Balakrishnan L."/>
            <person name="Muthusamy B."/>
            <person name="Yadav A.K."/>
            <person name="Shrivastava P."/>
            <person name="Marimuthu A."/>
            <person name="Anand S."/>
            <person name="Sundaram H."/>
            <person name="Kingsbury R."/>
            <person name="Harsha H.C."/>
            <person name="Nair B."/>
            <person name="Prasad T.S."/>
            <person name="Chauhan D.S."/>
            <person name="Katoch K."/>
            <person name="Katoch V.M."/>
            <person name="Kumar P."/>
            <person name="Chaerkady R."/>
            <person name="Ramachandran S."/>
            <person name="Dash D."/>
            <person name="Pandey A."/>
        </authorList>
    </citation>
    <scope>IDENTIFICATION BY MASS SPECTROMETRY [LARGE SCALE ANALYSIS]</scope>
    <source>
        <strain>ATCC 25618 / H37Rv</strain>
    </source>
</reference>
<reference key="4">
    <citation type="journal article" date="2004" name="Eur. J. Biochem.">
        <title>X-ray structure of peptidyl-prolyl cis-trans isomerase A from Mycobacterium tuberculosis.</title>
        <authorList>
            <person name="Henriksson L.M."/>
            <person name="Johansson P."/>
            <person name="Unge T."/>
            <person name="Mowbray S.L."/>
        </authorList>
    </citation>
    <scope>X-RAY CRYSTALLOGRAPHY (2.6 ANGSTROMS) OF 2-182</scope>
    <scope>FUNCTION</scope>
    <scope>CATALYTIC ACTIVITY</scope>
    <scope>SUBUNIT</scope>
    <source>
        <strain>H37Rv</strain>
    </source>
</reference>
<sequence length="182" mass="19239">MADCDSVTNSPLATATATLHTNRGDIKIALFGNHAPKTVANFVGLAQGTKDYSTQNASGGPSGPFYDGAVFHRVIQGFMIQGGDPTGTGRGGPGYKFADEFHPELQFDKPYLLAMANAGPGTNGSQFFITVGKTPHLNRRHTIFGEVIDAESQRVVEAISKTATDGNDRPTDPVVIESITIS</sequence>
<comment type="function">
    <text evidence="3 4">PPIases accelerate the folding of proteins. It catalyzes the cis-trans isomerization of proline imidic peptide bonds in oligopeptides.</text>
</comment>
<comment type="catalytic activity">
    <reaction evidence="3">
        <text>[protein]-peptidylproline (omega=180) = [protein]-peptidylproline (omega=0)</text>
        <dbReference type="Rhea" id="RHEA:16237"/>
        <dbReference type="Rhea" id="RHEA-COMP:10747"/>
        <dbReference type="Rhea" id="RHEA-COMP:10748"/>
        <dbReference type="ChEBI" id="CHEBI:83833"/>
        <dbReference type="ChEBI" id="CHEBI:83834"/>
        <dbReference type="EC" id="5.2.1.8"/>
    </reaction>
</comment>
<comment type="subunit">
    <text evidence="3">Homodimer.</text>
</comment>
<comment type="subcellular location">
    <subcellularLocation>
        <location evidence="1">Cytoplasm</location>
    </subcellularLocation>
</comment>
<comment type="similarity">
    <text evidence="6">Belongs to the cyclophilin-type PPIase family.</text>
</comment>
<proteinExistence type="evidence at protein level"/>
<name>PPIA_MYCTU</name>
<accession>P9WHW3</accession>
<accession>L0T5F1</accession>
<accession>P65762</accession>
<accession>P71578</accession>
<evidence type="ECO:0000250" key="1"/>
<evidence type="ECO:0000255" key="2">
    <source>
        <dbReference type="PROSITE-ProRule" id="PRU00156"/>
    </source>
</evidence>
<evidence type="ECO:0000269" key="3">
    <source>
    </source>
</evidence>
<evidence type="ECO:0000269" key="4">
    <source>
    </source>
</evidence>
<evidence type="ECO:0000303" key="5">
    <source>
    </source>
</evidence>
<evidence type="ECO:0000305" key="6"/>
<evidence type="ECO:0007829" key="7">
    <source>
        <dbReference type="PDB" id="1W74"/>
    </source>
</evidence>
<organism>
    <name type="scientific">Mycobacterium tuberculosis (strain ATCC 25618 / H37Rv)</name>
    <dbReference type="NCBI Taxonomy" id="83332"/>
    <lineage>
        <taxon>Bacteria</taxon>
        <taxon>Bacillati</taxon>
        <taxon>Actinomycetota</taxon>
        <taxon>Actinomycetes</taxon>
        <taxon>Mycobacteriales</taxon>
        <taxon>Mycobacteriaceae</taxon>
        <taxon>Mycobacterium</taxon>
        <taxon>Mycobacterium tuberculosis complex</taxon>
    </lineage>
</organism>